<gene>
    <name evidence="1" type="primary">ureF</name>
    <name type="ordered locus">Pmen_0665</name>
</gene>
<feature type="chain" id="PRO_0000344150" description="Urease accessory protein UreF">
    <location>
        <begin position="1"/>
        <end position="224"/>
    </location>
</feature>
<accession>A4XQ17</accession>
<dbReference type="EMBL" id="CP000680">
    <property type="protein sequence ID" value="ABP83433.1"/>
    <property type="molecule type" value="Genomic_DNA"/>
</dbReference>
<dbReference type="SMR" id="A4XQ17"/>
<dbReference type="STRING" id="399739.Pmen_0665"/>
<dbReference type="KEGG" id="pmy:Pmen_0665"/>
<dbReference type="PATRIC" id="fig|399739.8.peg.672"/>
<dbReference type="eggNOG" id="COG0830">
    <property type="taxonomic scope" value="Bacteria"/>
</dbReference>
<dbReference type="HOGENOM" id="CLU_049215_2_1_6"/>
<dbReference type="OrthoDB" id="9798772at2"/>
<dbReference type="GO" id="GO:0005737">
    <property type="term" value="C:cytoplasm"/>
    <property type="evidence" value="ECO:0007669"/>
    <property type="project" value="UniProtKB-SubCell"/>
</dbReference>
<dbReference type="GO" id="GO:0016151">
    <property type="term" value="F:nickel cation binding"/>
    <property type="evidence" value="ECO:0007669"/>
    <property type="project" value="UniProtKB-UniRule"/>
</dbReference>
<dbReference type="Gene3D" id="1.10.4190.10">
    <property type="entry name" value="Urease accessory protein UreF"/>
    <property type="match status" value="1"/>
</dbReference>
<dbReference type="HAMAP" id="MF_01385">
    <property type="entry name" value="UreF"/>
    <property type="match status" value="1"/>
</dbReference>
<dbReference type="InterPro" id="IPR002639">
    <property type="entry name" value="UreF"/>
</dbReference>
<dbReference type="InterPro" id="IPR038277">
    <property type="entry name" value="UreF_sf"/>
</dbReference>
<dbReference type="PANTHER" id="PTHR33620">
    <property type="entry name" value="UREASE ACCESSORY PROTEIN F"/>
    <property type="match status" value="1"/>
</dbReference>
<dbReference type="PANTHER" id="PTHR33620:SF1">
    <property type="entry name" value="UREASE ACCESSORY PROTEIN F"/>
    <property type="match status" value="1"/>
</dbReference>
<dbReference type="Pfam" id="PF01730">
    <property type="entry name" value="UreF"/>
    <property type="match status" value="1"/>
</dbReference>
<dbReference type="PIRSF" id="PIRSF009467">
    <property type="entry name" value="Ureas_acces_UreF"/>
    <property type="match status" value="1"/>
</dbReference>
<comment type="function">
    <text evidence="1">Required for maturation of urease via the functional incorporation of the urease nickel metallocenter.</text>
</comment>
<comment type="subunit">
    <text evidence="1">UreD, UreF and UreG form a complex that acts as a GTP-hydrolysis-dependent molecular chaperone, activating the urease apoprotein by helping to assemble the nickel containing metallocenter of UreC. The UreE protein probably delivers the nickel.</text>
</comment>
<comment type="subcellular location">
    <subcellularLocation>
        <location evidence="1">Cytoplasm</location>
    </subcellularLocation>
</comment>
<comment type="similarity">
    <text evidence="1">Belongs to the UreF family.</text>
</comment>
<proteinExistence type="inferred from homology"/>
<evidence type="ECO:0000255" key="1">
    <source>
        <dbReference type="HAMAP-Rule" id="MF_01385"/>
    </source>
</evidence>
<keyword id="KW-0143">Chaperone</keyword>
<keyword id="KW-0963">Cytoplasm</keyword>
<keyword id="KW-0996">Nickel insertion</keyword>
<protein>
    <recommendedName>
        <fullName evidence="1">Urease accessory protein UreF</fullName>
    </recommendedName>
</protein>
<organism>
    <name type="scientific">Ectopseudomonas mendocina (strain ymp)</name>
    <name type="common">Pseudomonas mendocina</name>
    <dbReference type="NCBI Taxonomy" id="399739"/>
    <lineage>
        <taxon>Bacteria</taxon>
        <taxon>Pseudomonadati</taxon>
        <taxon>Pseudomonadota</taxon>
        <taxon>Gammaproteobacteria</taxon>
        <taxon>Pseudomonadales</taxon>
        <taxon>Pseudomonadaceae</taxon>
        <taxon>Ectopseudomonas</taxon>
    </lineage>
</organism>
<name>UREF_ECTM1</name>
<sequence length="224" mass="24944">MKPAWALLRLASPQLPIGGYSYSQGLEWAIDSGLIQDADAAERWLADQLTLNLARFEAPLLLAHCRAAHEGNWPHLQELAERHRASRETRELALESRQMGYSLRQLLEGLPELDEAARELLASHHEPGLALAWALAARAWQITPDDALAAWLWGWLENQLAVLMKVLPLGQQAAQRLTSRLLPTLEAAQQQAASLSPEHWGSAAFGLALASMAHERQYSRLFRS</sequence>
<reference key="1">
    <citation type="submission" date="2007-04" db="EMBL/GenBank/DDBJ databases">
        <title>Complete sequence of Pseudomonas mendocina ymp.</title>
        <authorList>
            <consortium name="US DOE Joint Genome Institute"/>
            <person name="Copeland A."/>
            <person name="Lucas S."/>
            <person name="Lapidus A."/>
            <person name="Barry K."/>
            <person name="Glavina del Rio T."/>
            <person name="Dalin E."/>
            <person name="Tice H."/>
            <person name="Pitluck S."/>
            <person name="Kiss H."/>
            <person name="Brettin T."/>
            <person name="Detter J.C."/>
            <person name="Bruce D."/>
            <person name="Han C."/>
            <person name="Schmutz J."/>
            <person name="Larimer F."/>
            <person name="Land M."/>
            <person name="Hauser L."/>
            <person name="Kyrpides N."/>
            <person name="Mikhailova N."/>
            <person name="Hersman L."/>
            <person name="Dubois J."/>
            <person name="Maurice P."/>
            <person name="Richardson P."/>
        </authorList>
    </citation>
    <scope>NUCLEOTIDE SEQUENCE [LARGE SCALE GENOMIC DNA]</scope>
    <source>
        <strain>ymp</strain>
    </source>
</reference>